<dbReference type="EC" id="1.1.1.37" evidence="1"/>
<dbReference type="EMBL" id="CP000034">
    <property type="protein sequence ID" value="ABB63402.1"/>
    <property type="molecule type" value="Genomic_DNA"/>
</dbReference>
<dbReference type="RefSeq" id="WP_005018898.1">
    <property type="nucleotide sequence ID" value="NC_007606.1"/>
</dbReference>
<dbReference type="RefSeq" id="YP_404893.1">
    <property type="nucleotide sequence ID" value="NC_007606.1"/>
</dbReference>
<dbReference type="SMR" id="Q32BA3"/>
<dbReference type="STRING" id="300267.SDY_3412"/>
<dbReference type="EnsemblBacteria" id="ABB63402">
    <property type="protein sequence ID" value="ABB63402"/>
    <property type="gene ID" value="SDY_3412"/>
</dbReference>
<dbReference type="KEGG" id="sdy:SDY_3412"/>
<dbReference type="PATRIC" id="fig|300267.13.peg.4070"/>
<dbReference type="HOGENOM" id="CLU_047181_0_1_6"/>
<dbReference type="Proteomes" id="UP000002716">
    <property type="component" value="Chromosome"/>
</dbReference>
<dbReference type="GO" id="GO:0005737">
    <property type="term" value="C:cytoplasm"/>
    <property type="evidence" value="ECO:0007669"/>
    <property type="project" value="TreeGrafter"/>
</dbReference>
<dbReference type="GO" id="GO:0030060">
    <property type="term" value="F:L-malate dehydrogenase (NAD+) activity"/>
    <property type="evidence" value="ECO:0007669"/>
    <property type="project" value="UniProtKB-UniRule"/>
</dbReference>
<dbReference type="GO" id="GO:0006108">
    <property type="term" value="P:malate metabolic process"/>
    <property type="evidence" value="ECO:0007669"/>
    <property type="project" value="InterPro"/>
</dbReference>
<dbReference type="GO" id="GO:0006099">
    <property type="term" value="P:tricarboxylic acid cycle"/>
    <property type="evidence" value="ECO:0007669"/>
    <property type="project" value="UniProtKB-UniRule"/>
</dbReference>
<dbReference type="CDD" id="cd01337">
    <property type="entry name" value="MDH_glyoxysomal_mitochondrial"/>
    <property type="match status" value="1"/>
</dbReference>
<dbReference type="FunFam" id="3.40.50.720:FF:000017">
    <property type="entry name" value="Malate dehydrogenase"/>
    <property type="match status" value="1"/>
</dbReference>
<dbReference type="FunFam" id="3.90.110.10:FF:000001">
    <property type="entry name" value="Malate dehydrogenase"/>
    <property type="match status" value="1"/>
</dbReference>
<dbReference type="Gene3D" id="3.90.110.10">
    <property type="entry name" value="Lactate dehydrogenase/glycoside hydrolase, family 4, C-terminal"/>
    <property type="match status" value="1"/>
</dbReference>
<dbReference type="Gene3D" id="3.40.50.720">
    <property type="entry name" value="NAD(P)-binding Rossmann-like Domain"/>
    <property type="match status" value="1"/>
</dbReference>
<dbReference type="HAMAP" id="MF_01516">
    <property type="entry name" value="Malate_dehydrog_1"/>
    <property type="match status" value="1"/>
</dbReference>
<dbReference type="InterPro" id="IPR001557">
    <property type="entry name" value="L-lactate/malate_DH"/>
</dbReference>
<dbReference type="InterPro" id="IPR022383">
    <property type="entry name" value="Lactate/malate_DH_C"/>
</dbReference>
<dbReference type="InterPro" id="IPR001236">
    <property type="entry name" value="Lactate/malate_DH_N"/>
</dbReference>
<dbReference type="InterPro" id="IPR015955">
    <property type="entry name" value="Lactate_DH/Glyco_Ohase_4_C"/>
</dbReference>
<dbReference type="InterPro" id="IPR001252">
    <property type="entry name" value="Malate_DH_AS"/>
</dbReference>
<dbReference type="InterPro" id="IPR010097">
    <property type="entry name" value="Malate_DH_type1"/>
</dbReference>
<dbReference type="InterPro" id="IPR023958">
    <property type="entry name" value="Malate_DH_type1_bac"/>
</dbReference>
<dbReference type="InterPro" id="IPR036291">
    <property type="entry name" value="NAD(P)-bd_dom_sf"/>
</dbReference>
<dbReference type="NCBIfam" id="TIGR01772">
    <property type="entry name" value="MDH_euk_gproteo"/>
    <property type="match status" value="1"/>
</dbReference>
<dbReference type="PANTHER" id="PTHR11540">
    <property type="entry name" value="MALATE AND LACTATE DEHYDROGENASE"/>
    <property type="match status" value="1"/>
</dbReference>
<dbReference type="PANTHER" id="PTHR11540:SF16">
    <property type="entry name" value="MALATE DEHYDROGENASE, MITOCHONDRIAL"/>
    <property type="match status" value="1"/>
</dbReference>
<dbReference type="Pfam" id="PF02866">
    <property type="entry name" value="Ldh_1_C"/>
    <property type="match status" value="1"/>
</dbReference>
<dbReference type="Pfam" id="PF00056">
    <property type="entry name" value="Ldh_1_N"/>
    <property type="match status" value="1"/>
</dbReference>
<dbReference type="PIRSF" id="PIRSF000102">
    <property type="entry name" value="Lac_mal_DH"/>
    <property type="match status" value="1"/>
</dbReference>
<dbReference type="SUPFAM" id="SSF56327">
    <property type="entry name" value="LDH C-terminal domain-like"/>
    <property type="match status" value="1"/>
</dbReference>
<dbReference type="SUPFAM" id="SSF51735">
    <property type="entry name" value="NAD(P)-binding Rossmann-fold domains"/>
    <property type="match status" value="1"/>
</dbReference>
<dbReference type="PROSITE" id="PS00068">
    <property type="entry name" value="MDH"/>
    <property type="match status" value="1"/>
</dbReference>
<accession>Q32BA3</accession>
<protein>
    <recommendedName>
        <fullName evidence="1">Malate dehydrogenase</fullName>
        <ecNumber evidence="1">1.1.1.37</ecNumber>
    </recommendedName>
</protein>
<reference key="1">
    <citation type="journal article" date="2005" name="Nucleic Acids Res.">
        <title>Genome dynamics and diversity of Shigella species, the etiologic agents of bacillary dysentery.</title>
        <authorList>
            <person name="Yang F."/>
            <person name="Yang J."/>
            <person name="Zhang X."/>
            <person name="Chen L."/>
            <person name="Jiang Y."/>
            <person name="Yan Y."/>
            <person name="Tang X."/>
            <person name="Wang J."/>
            <person name="Xiong Z."/>
            <person name="Dong J."/>
            <person name="Xue Y."/>
            <person name="Zhu Y."/>
            <person name="Xu X."/>
            <person name="Sun L."/>
            <person name="Chen S."/>
            <person name="Nie H."/>
            <person name="Peng J."/>
            <person name="Xu J."/>
            <person name="Wang Y."/>
            <person name="Yuan Z."/>
            <person name="Wen Y."/>
            <person name="Yao Z."/>
            <person name="Shen Y."/>
            <person name="Qiang B."/>
            <person name="Hou Y."/>
            <person name="Yu J."/>
            <person name="Jin Q."/>
        </authorList>
    </citation>
    <scope>NUCLEOTIDE SEQUENCE [LARGE SCALE GENOMIC DNA]</scope>
    <source>
        <strain>Sd197</strain>
    </source>
</reference>
<evidence type="ECO:0000255" key="1">
    <source>
        <dbReference type="HAMAP-Rule" id="MF_01516"/>
    </source>
</evidence>
<name>MDH_SHIDS</name>
<organism>
    <name type="scientific">Shigella dysenteriae serotype 1 (strain Sd197)</name>
    <dbReference type="NCBI Taxonomy" id="300267"/>
    <lineage>
        <taxon>Bacteria</taxon>
        <taxon>Pseudomonadati</taxon>
        <taxon>Pseudomonadota</taxon>
        <taxon>Gammaproteobacteria</taxon>
        <taxon>Enterobacterales</taxon>
        <taxon>Enterobacteriaceae</taxon>
        <taxon>Shigella</taxon>
    </lineage>
</organism>
<proteinExistence type="inferred from homology"/>
<comment type="function">
    <text evidence="1">Catalyzes the reversible oxidation of malate to oxaloacetate.</text>
</comment>
<comment type="catalytic activity">
    <reaction evidence="1">
        <text>(S)-malate + NAD(+) = oxaloacetate + NADH + H(+)</text>
        <dbReference type="Rhea" id="RHEA:21432"/>
        <dbReference type="ChEBI" id="CHEBI:15378"/>
        <dbReference type="ChEBI" id="CHEBI:15589"/>
        <dbReference type="ChEBI" id="CHEBI:16452"/>
        <dbReference type="ChEBI" id="CHEBI:57540"/>
        <dbReference type="ChEBI" id="CHEBI:57945"/>
        <dbReference type="EC" id="1.1.1.37"/>
    </reaction>
</comment>
<comment type="subunit">
    <text evidence="1">Homodimer.</text>
</comment>
<comment type="similarity">
    <text evidence="1">Belongs to the LDH/MDH superfamily. MDH type 1 family.</text>
</comment>
<feature type="chain" id="PRO_0000294309" description="Malate dehydrogenase">
    <location>
        <begin position="1"/>
        <end position="312"/>
    </location>
</feature>
<feature type="active site" description="Proton acceptor" evidence="1">
    <location>
        <position position="177"/>
    </location>
</feature>
<feature type="binding site" evidence="1">
    <location>
        <begin position="7"/>
        <end position="13"/>
    </location>
    <ligand>
        <name>NAD(+)</name>
        <dbReference type="ChEBI" id="CHEBI:57540"/>
    </ligand>
</feature>
<feature type="binding site" evidence="1">
    <location>
        <position position="34"/>
    </location>
    <ligand>
        <name>NAD(+)</name>
        <dbReference type="ChEBI" id="CHEBI:57540"/>
    </ligand>
</feature>
<feature type="binding site" evidence="1">
    <location>
        <position position="81"/>
    </location>
    <ligand>
        <name>substrate</name>
    </ligand>
</feature>
<feature type="binding site" evidence="1">
    <location>
        <position position="87"/>
    </location>
    <ligand>
        <name>substrate</name>
    </ligand>
</feature>
<feature type="binding site" evidence="1">
    <location>
        <position position="94"/>
    </location>
    <ligand>
        <name>NAD(+)</name>
        <dbReference type="ChEBI" id="CHEBI:57540"/>
    </ligand>
</feature>
<feature type="binding site" evidence="1">
    <location>
        <begin position="117"/>
        <end position="119"/>
    </location>
    <ligand>
        <name>NAD(+)</name>
        <dbReference type="ChEBI" id="CHEBI:57540"/>
    </ligand>
</feature>
<feature type="binding site" evidence="1">
    <location>
        <position position="119"/>
    </location>
    <ligand>
        <name>substrate</name>
    </ligand>
</feature>
<feature type="binding site" evidence="1">
    <location>
        <position position="153"/>
    </location>
    <ligand>
        <name>substrate</name>
    </ligand>
</feature>
<feature type="binding site" evidence="1">
    <location>
        <position position="227"/>
    </location>
    <ligand>
        <name>NAD(+)</name>
        <dbReference type="ChEBI" id="CHEBI:57540"/>
    </ligand>
</feature>
<sequence>MKVAVLGAAGGIGQALALLLKTQLPSGSELSLYDIAPVTPGVAVDLSHIPTAVKIKGFSGEDATPALEGADVVLISAGVARKPGMDRSDLFNVNAGIVKNLVQQVAKTCPKACIGIITNPVNTTVAIAAEVLKKAGVYDKNKLFGVTTLDIIRSNTFVAELKGKQPGEVEVPVIGGHSGVTILPLLSQVLGVSFTEQEVADLTKRIQNAGTEVVEAKAGGGSATLSMGQAAARFGLSLVRALQGEQGVVECAYVEGDGQYARFFSQPLLLGKSGVEERKSIGTLSAFEQNALEGMLDTLKKDIALGEEFVNK</sequence>
<keyword id="KW-0520">NAD</keyword>
<keyword id="KW-0560">Oxidoreductase</keyword>
<keyword id="KW-1185">Reference proteome</keyword>
<keyword id="KW-0816">Tricarboxylic acid cycle</keyword>
<gene>
    <name evidence="1" type="primary">mdh</name>
    <name type="ordered locus">SDY_3412</name>
</gene>